<name>EFP_SHEB9</name>
<evidence type="ECO:0000255" key="1">
    <source>
        <dbReference type="HAMAP-Rule" id="MF_00141"/>
    </source>
</evidence>
<keyword id="KW-0963">Cytoplasm</keyword>
<keyword id="KW-0251">Elongation factor</keyword>
<keyword id="KW-0648">Protein biosynthesis</keyword>
<comment type="function">
    <text evidence="1">Involved in peptide bond synthesis. Stimulates efficient translation and peptide-bond synthesis on native or reconstituted 70S ribosomes in vitro. Probably functions indirectly by altering the affinity of the ribosome for aminoacyl-tRNA, thus increasing their reactivity as acceptors for peptidyl transferase.</text>
</comment>
<comment type="pathway">
    <text evidence="1">Protein biosynthesis; polypeptide chain elongation.</text>
</comment>
<comment type="subcellular location">
    <subcellularLocation>
        <location evidence="1">Cytoplasm</location>
    </subcellularLocation>
</comment>
<comment type="similarity">
    <text evidence="1">Belongs to the elongation factor P family.</text>
</comment>
<feature type="chain" id="PRO_1000076532" description="Elongation factor P">
    <location>
        <begin position="1"/>
        <end position="186"/>
    </location>
</feature>
<gene>
    <name evidence="1" type="primary">efp</name>
    <name type="ordered locus">Sbal195_2189</name>
</gene>
<protein>
    <recommendedName>
        <fullName evidence="1">Elongation factor P</fullName>
        <shortName evidence="1">EF-P</shortName>
    </recommendedName>
</protein>
<dbReference type="EMBL" id="CP000891">
    <property type="protein sequence ID" value="ABX49358.1"/>
    <property type="molecule type" value="Genomic_DNA"/>
</dbReference>
<dbReference type="RefSeq" id="WP_006081573.1">
    <property type="nucleotide sequence ID" value="NC_009997.1"/>
</dbReference>
<dbReference type="SMR" id="A9L1B3"/>
<dbReference type="GeneID" id="11772332"/>
<dbReference type="KEGG" id="sbn:Sbal195_2189"/>
<dbReference type="HOGENOM" id="CLU_074944_2_1_6"/>
<dbReference type="UniPathway" id="UPA00345"/>
<dbReference type="Proteomes" id="UP000000770">
    <property type="component" value="Chromosome"/>
</dbReference>
<dbReference type="GO" id="GO:0005737">
    <property type="term" value="C:cytoplasm"/>
    <property type="evidence" value="ECO:0007669"/>
    <property type="project" value="UniProtKB-SubCell"/>
</dbReference>
<dbReference type="GO" id="GO:0003746">
    <property type="term" value="F:translation elongation factor activity"/>
    <property type="evidence" value="ECO:0007669"/>
    <property type="project" value="UniProtKB-UniRule"/>
</dbReference>
<dbReference type="GO" id="GO:0043043">
    <property type="term" value="P:peptide biosynthetic process"/>
    <property type="evidence" value="ECO:0007669"/>
    <property type="project" value="InterPro"/>
</dbReference>
<dbReference type="CDD" id="cd04470">
    <property type="entry name" value="S1_EF-P_repeat_1"/>
    <property type="match status" value="1"/>
</dbReference>
<dbReference type="CDD" id="cd05794">
    <property type="entry name" value="S1_EF-P_repeat_2"/>
    <property type="match status" value="1"/>
</dbReference>
<dbReference type="FunFam" id="2.30.30.30:FF:000003">
    <property type="entry name" value="Elongation factor P"/>
    <property type="match status" value="1"/>
</dbReference>
<dbReference type="FunFam" id="2.40.50.140:FF:000004">
    <property type="entry name" value="Elongation factor P"/>
    <property type="match status" value="1"/>
</dbReference>
<dbReference type="FunFam" id="2.40.50.140:FF:000009">
    <property type="entry name" value="Elongation factor P"/>
    <property type="match status" value="1"/>
</dbReference>
<dbReference type="Gene3D" id="2.30.30.30">
    <property type="match status" value="1"/>
</dbReference>
<dbReference type="Gene3D" id="2.40.50.140">
    <property type="entry name" value="Nucleic acid-binding proteins"/>
    <property type="match status" value="2"/>
</dbReference>
<dbReference type="HAMAP" id="MF_00141">
    <property type="entry name" value="EF_P"/>
    <property type="match status" value="1"/>
</dbReference>
<dbReference type="InterPro" id="IPR015365">
    <property type="entry name" value="Elong-fact-P_C"/>
</dbReference>
<dbReference type="InterPro" id="IPR012340">
    <property type="entry name" value="NA-bd_OB-fold"/>
</dbReference>
<dbReference type="InterPro" id="IPR014722">
    <property type="entry name" value="Rib_uL2_dom2"/>
</dbReference>
<dbReference type="InterPro" id="IPR020599">
    <property type="entry name" value="Transl_elong_fac_P/YeiP"/>
</dbReference>
<dbReference type="InterPro" id="IPR013185">
    <property type="entry name" value="Transl_elong_KOW-like"/>
</dbReference>
<dbReference type="InterPro" id="IPR001059">
    <property type="entry name" value="Transl_elong_P/YeiP_cen"/>
</dbReference>
<dbReference type="InterPro" id="IPR011768">
    <property type="entry name" value="Transl_elongation_fac_P"/>
</dbReference>
<dbReference type="InterPro" id="IPR008991">
    <property type="entry name" value="Translation_prot_SH3-like_sf"/>
</dbReference>
<dbReference type="NCBIfam" id="TIGR00038">
    <property type="entry name" value="efp"/>
    <property type="match status" value="1"/>
</dbReference>
<dbReference type="NCBIfam" id="NF001810">
    <property type="entry name" value="PRK00529.1"/>
    <property type="match status" value="1"/>
</dbReference>
<dbReference type="PANTHER" id="PTHR30053">
    <property type="entry name" value="ELONGATION FACTOR P"/>
    <property type="match status" value="1"/>
</dbReference>
<dbReference type="PANTHER" id="PTHR30053:SF12">
    <property type="entry name" value="ELONGATION FACTOR P (EF-P) FAMILY PROTEIN"/>
    <property type="match status" value="1"/>
</dbReference>
<dbReference type="Pfam" id="PF01132">
    <property type="entry name" value="EFP"/>
    <property type="match status" value="1"/>
</dbReference>
<dbReference type="Pfam" id="PF08207">
    <property type="entry name" value="EFP_N"/>
    <property type="match status" value="1"/>
</dbReference>
<dbReference type="Pfam" id="PF09285">
    <property type="entry name" value="Elong-fact-P_C"/>
    <property type="match status" value="1"/>
</dbReference>
<dbReference type="PIRSF" id="PIRSF005901">
    <property type="entry name" value="EF-P"/>
    <property type="match status" value="1"/>
</dbReference>
<dbReference type="SMART" id="SM01185">
    <property type="entry name" value="EFP"/>
    <property type="match status" value="1"/>
</dbReference>
<dbReference type="SMART" id="SM00841">
    <property type="entry name" value="Elong-fact-P_C"/>
    <property type="match status" value="1"/>
</dbReference>
<dbReference type="SUPFAM" id="SSF50249">
    <property type="entry name" value="Nucleic acid-binding proteins"/>
    <property type="match status" value="2"/>
</dbReference>
<dbReference type="SUPFAM" id="SSF50104">
    <property type="entry name" value="Translation proteins SH3-like domain"/>
    <property type="match status" value="1"/>
</dbReference>
<sequence length="186" mass="20583">MKTAHEIRPGNVIMLDGSPWVVQKTETTRSGRNAAIVKLKLKNLLLNSGTETTFKGEDKLEDIILDRLDCTYSYFADPMFVFMDAEYNQYDVEAENLGDAAAYIVDGMEETCQVTFYDGKAISVEMPTTIVREVIYTEPSARGDTSGKVMKPATITGGGTVTVADFVKVGDKIEIDTRTGEFKKRV</sequence>
<accession>A9L1B3</accession>
<proteinExistence type="inferred from homology"/>
<organism>
    <name type="scientific">Shewanella baltica (strain OS195)</name>
    <dbReference type="NCBI Taxonomy" id="399599"/>
    <lineage>
        <taxon>Bacteria</taxon>
        <taxon>Pseudomonadati</taxon>
        <taxon>Pseudomonadota</taxon>
        <taxon>Gammaproteobacteria</taxon>
        <taxon>Alteromonadales</taxon>
        <taxon>Shewanellaceae</taxon>
        <taxon>Shewanella</taxon>
    </lineage>
</organism>
<reference key="1">
    <citation type="submission" date="2007-11" db="EMBL/GenBank/DDBJ databases">
        <title>Complete sequence of chromosome of Shewanella baltica OS195.</title>
        <authorList>
            <consortium name="US DOE Joint Genome Institute"/>
            <person name="Copeland A."/>
            <person name="Lucas S."/>
            <person name="Lapidus A."/>
            <person name="Barry K."/>
            <person name="Glavina del Rio T."/>
            <person name="Dalin E."/>
            <person name="Tice H."/>
            <person name="Pitluck S."/>
            <person name="Chain P."/>
            <person name="Malfatti S."/>
            <person name="Shin M."/>
            <person name="Vergez L."/>
            <person name="Schmutz J."/>
            <person name="Larimer F."/>
            <person name="Land M."/>
            <person name="Hauser L."/>
            <person name="Kyrpides N."/>
            <person name="Kim E."/>
            <person name="Brettar I."/>
            <person name="Rodrigues J."/>
            <person name="Konstantinidis K."/>
            <person name="Klappenbach J."/>
            <person name="Hofle M."/>
            <person name="Tiedje J."/>
            <person name="Richardson P."/>
        </authorList>
    </citation>
    <scope>NUCLEOTIDE SEQUENCE [LARGE SCALE GENOMIC DNA]</scope>
    <source>
        <strain>OS195</strain>
    </source>
</reference>